<gene>
    <name type="primary">SPL1</name>
    <name type="ordered locus">Os01g0292900</name>
    <name type="ordered locus">LOC_Os01g18850</name>
    <name evidence="7" type="ORF">OsJ_01398</name>
    <name type="ORF">P0706B05.40</name>
</gene>
<name>SPL1_ORYSJ</name>
<protein>
    <recommendedName>
        <fullName>Squamosa promoter-binding-like protein 1</fullName>
    </recommendedName>
</protein>
<proteinExistence type="evidence at transcript level"/>
<evidence type="ECO:0000250" key="1"/>
<evidence type="ECO:0000255" key="2"/>
<evidence type="ECO:0000255" key="3">
    <source>
        <dbReference type="PROSITE-ProRule" id="PRU00470"/>
    </source>
</evidence>
<evidence type="ECO:0000256" key="4">
    <source>
        <dbReference type="SAM" id="MobiDB-lite"/>
    </source>
</evidence>
<evidence type="ECO:0000269" key="5">
    <source>
    </source>
</evidence>
<evidence type="ECO:0000305" key="6"/>
<evidence type="ECO:0000312" key="7">
    <source>
        <dbReference type="EMBL" id="EEE54382.1"/>
    </source>
</evidence>
<accession>Q9LGU7</accession>
<accession>B9EVN3</accession>
<sequence length="862" mass="95876">MSSGLKKKGLEWDLNDWRWDSNLFLATPSNASPSKCSRRELGRAEGEIDFGVVDKRRRVSPEDDDGEECINAATTNGDDGQISGQRGRSSEDEMPRQGTCSSSGPCCQVDGCTVNLSSARDYNKRHKVCEVHTKSGVVRIKNVEHRFCQQCSRFHFLQEFDEGKKSCRSRLAQHNRRRRKVQVQAGVDVNSLHENHSLSNTLLLLLKQLSGLDSSGPSEQINGPNYLTNLVKNLAALAGTQRNQDMLKNANSAAIASHTGNYVAKGNSLHDSRPHIPVGTESTAEEPTVERRVQNFDLNDAYVEGDENRTDKIVFKLFGKEPNDFPSDLRAQILSWLSNCPSDIESYIRPGCIILTIYMRLPNWMWDKLAADPAHWIQKLISLSTDTLWRTGWMYARVQDYLTLSCNGNLMLASPWQPAIGNKHQILFITPIAVACSSTANFSVKGLNIAQPTTKLLCIFGGKYLIQEATEKLLDDTKMQRGPQCLTFSCSFPSTSGRGFIEVEDLDQSSLSFPFVVAEEDVCSEIRTLEHLLNLVSFDDTLVEKNDLLASRDRALNFLHEFGWFLQRSHIRATSETPKDCTEGFPAARFRWLLSFAVDREFCAVIKKLLDTLFQGGVDLDVQSTVEFVLKQDLVFVAVNKRSKPLIDFLLTYTTSSAPMDGTESAAPAQFLFTPDIAGPSDITPLHIAATYSDTAGVLDALTDDPQQLGIKAWKNARDATGLTPEDYARKRGHESYIEMVQNKIDSRLPKAHVSVTISSTTSTTDFTEKHASQSKTTDQTAFDVEKGQQISTKPPLSCRQCLPELAYRHHLNRFLSTRPAVLSLVAIAAVCVCVGLIMQGPPHIGGMRGPFRWNSLRSGPK</sequence>
<keyword id="KW-0238">DNA-binding</keyword>
<keyword id="KW-0479">Metal-binding</keyword>
<keyword id="KW-0539">Nucleus</keyword>
<keyword id="KW-1185">Reference proteome</keyword>
<keyword id="KW-0804">Transcription</keyword>
<keyword id="KW-0805">Transcription regulation</keyword>
<keyword id="KW-0862">Zinc</keyword>
<keyword id="KW-0863">Zinc-finger</keyword>
<reference key="1">
    <citation type="journal article" date="2002" name="Nature">
        <title>The genome sequence and structure of rice chromosome 1.</title>
        <authorList>
            <person name="Sasaki T."/>
            <person name="Matsumoto T."/>
            <person name="Yamamoto K."/>
            <person name="Sakata K."/>
            <person name="Baba T."/>
            <person name="Katayose Y."/>
            <person name="Wu J."/>
            <person name="Niimura Y."/>
            <person name="Cheng Z."/>
            <person name="Nagamura Y."/>
            <person name="Antonio B.A."/>
            <person name="Kanamori H."/>
            <person name="Hosokawa S."/>
            <person name="Masukawa M."/>
            <person name="Arikawa K."/>
            <person name="Chiden Y."/>
            <person name="Hayashi M."/>
            <person name="Okamoto M."/>
            <person name="Ando T."/>
            <person name="Aoki H."/>
            <person name="Arita K."/>
            <person name="Hamada M."/>
            <person name="Harada C."/>
            <person name="Hijishita S."/>
            <person name="Honda M."/>
            <person name="Ichikawa Y."/>
            <person name="Idonuma A."/>
            <person name="Iijima M."/>
            <person name="Ikeda M."/>
            <person name="Ikeno M."/>
            <person name="Ito S."/>
            <person name="Ito T."/>
            <person name="Ito Y."/>
            <person name="Ito Y."/>
            <person name="Iwabuchi A."/>
            <person name="Kamiya K."/>
            <person name="Karasawa W."/>
            <person name="Katagiri S."/>
            <person name="Kikuta A."/>
            <person name="Kobayashi N."/>
            <person name="Kono I."/>
            <person name="Machita K."/>
            <person name="Maehara T."/>
            <person name="Mizuno H."/>
            <person name="Mizubayashi T."/>
            <person name="Mukai Y."/>
            <person name="Nagasaki H."/>
            <person name="Nakashima M."/>
            <person name="Nakama Y."/>
            <person name="Nakamichi Y."/>
            <person name="Nakamura M."/>
            <person name="Namiki N."/>
            <person name="Negishi M."/>
            <person name="Ohta I."/>
            <person name="Ono N."/>
            <person name="Saji S."/>
            <person name="Sakai K."/>
            <person name="Shibata M."/>
            <person name="Shimokawa T."/>
            <person name="Shomura A."/>
            <person name="Song J."/>
            <person name="Takazaki Y."/>
            <person name="Terasawa K."/>
            <person name="Tsuji K."/>
            <person name="Waki K."/>
            <person name="Yamagata H."/>
            <person name="Yamane H."/>
            <person name="Yoshiki S."/>
            <person name="Yoshihara R."/>
            <person name="Yukawa K."/>
            <person name="Zhong H."/>
            <person name="Iwama H."/>
            <person name="Endo T."/>
            <person name="Ito H."/>
            <person name="Hahn J.H."/>
            <person name="Kim H.-I."/>
            <person name="Eun M.-Y."/>
            <person name="Yano M."/>
            <person name="Jiang J."/>
            <person name="Gojobori T."/>
        </authorList>
    </citation>
    <scope>NUCLEOTIDE SEQUENCE [LARGE SCALE GENOMIC DNA]</scope>
    <source>
        <strain>cv. Nipponbare</strain>
    </source>
</reference>
<reference key="2">
    <citation type="journal article" date="2005" name="Nature">
        <title>The map-based sequence of the rice genome.</title>
        <authorList>
            <consortium name="International rice genome sequencing project (IRGSP)"/>
        </authorList>
    </citation>
    <scope>NUCLEOTIDE SEQUENCE [LARGE SCALE GENOMIC DNA]</scope>
    <source>
        <strain>cv. Nipponbare</strain>
    </source>
</reference>
<reference key="3">
    <citation type="journal article" date="2008" name="Nucleic Acids Res.">
        <title>The rice annotation project database (RAP-DB): 2008 update.</title>
        <authorList>
            <consortium name="The rice annotation project (RAP)"/>
        </authorList>
    </citation>
    <scope>GENOME REANNOTATION</scope>
    <source>
        <strain>cv. Nipponbare</strain>
    </source>
</reference>
<reference key="4">
    <citation type="journal article" date="2013" name="Rice">
        <title>Improvement of the Oryza sativa Nipponbare reference genome using next generation sequence and optical map data.</title>
        <authorList>
            <person name="Kawahara Y."/>
            <person name="de la Bastide M."/>
            <person name="Hamilton J.P."/>
            <person name="Kanamori H."/>
            <person name="McCombie W.R."/>
            <person name="Ouyang S."/>
            <person name="Schwartz D.C."/>
            <person name="Tanaka T."/>
            <person name="Wu J."/>
            <person name="Zhou S."/>
            <person name="Childs K.L."/>
            <person name="Davidson R.M."/>
            <person name="Lin H."/>
            <person name="Quesada-Ocampo L."/>
            <person name="Vaillancourt B."/>
            <person name="Sakai H."/>
            <person name="Lee S.S."/>
            <person name="Kim J."/>
            <person name="Numa H."/>
            <person name="Itoh T."/>
            <person name="Buell C.R."/>
            <person name="Matsumoto T."/>
        </authorList>
    </citation>
    <scope>GENOME REANNOTATION</scope>
    <source>
        <strain>cv. Nipponbare</strain>
    </source>
</reference>
<reference key="5">
    <citation type="journal article" date="2005" name="PLoS Biol.">
        <title>The genomes of Oryza sativa: a history of duplications.</title>
        <authorList>
            <person name="Yu J."/>
            <person name="Wang J."/>
            <person name="Lin W."/>
            <person name="Li S."/>
            <person name="Li H."/>
            <person name="Zhou J."/>
            <person name="Ni P."/>
            <person name="Dong W."/>
            <person name="Hu S."/>
            <person name="Zeng C."/>
            <person name="Zhang J."/>
            <person name="Zhang Y."/>
            <person name="Li R."/>
            <person name="Xu Z."/>
            <person name="Li S."/>
            <person name="Li X."/>
            <person name="Zheng H."/>
            <person name="Cong L."/>
            <person name="Lin L."/>
            <person name="Yin J."/>
            <person name="Geng J."/>
            <person name="Li G."/>
            <person name="Shi J."/>
            <person name="Liu J."/>
            <person name="Lv H."/>
            <person name="Li J."/>
            <person name="Wang J."/>
            <person name="Deng Y."/>
            <person name="Ran L."/>
            <person name="Shi X."/>
            <person name="Wang X."/>
            <person name="Wu Q."/>
            <person name="Li C."/>
            <person name="Ren X."/>
            <person name="Wang J."/>
            <person name="Wang X."/>
            <person name="Li D."/>
            <person name="Liu D."/>
            <person name="Zhang X."/>
            <person name="Ji Z."/>
            <person name="Zhao W."/>
            <person name="Sun Y."/>
            <person name="Zhang Z."/>
            <person name="Bao J."/>
            <person name="Han Y."/>
            <person name="Dong L."/>
            <person name="Ji J."/>
            <person name="Chen P."/>
            <person name="Wu S."/>
            <person name="Liu J."/>
            <person name="Xiao Y."/>
            <person name="Bu D."/>
            <person name="Tan J."/>
            <person name="Yang L."/>
            <person name="Ye C."/>
            <person name="Zhang J."/>
            <person name="Xu J."/>
            <person name="Zhou Y."/>
            <person name="Yu Y."/>
            <person name="Zhang B."/>
            <person name="Zhuang S."/>
            <person name="Wei H."/>
            <person name="Liu B."/>
            <person name="Lei M."/>
            <person name="Yu H."/>
            <person name="Li Y."/>
            <person name="Xu H."/>
            <person name="Wei S."/>
            <person name="He X."/>
            <person name="Fang L."/>
            <person name="Zhang Z."/>
            <person name="Zhang Y."/>
            <person name="Huang X."/>
            <person name="Su Z."/>
            <person name="Tong W."/>
            <person name="Li J."/>
            <person name="Tong Z."/>
            <person name="Li S."/>
            <person name="Ye J."/>
            <person name="Wang L."/>
            <person name="Fang L."/>
            <person name="Lei T."/>
            <person name="Chen C.-S."/>
            <person name="Chen H.-C."/>
            <person name="Xu Z."/>
            <person name="Li H."/>
            <person name="Huang H."/>
            <person name="Zhang F."/>
            <person name="Xu H."/>
            <person name="Li N."/>
            <person name="Zhao C."/>
            <person name="Li S."/>
            <person name="Dong L."/>
            <person name="Huang Y."/>
            <person name="Li L."/>
            <person name="Xi Y."/>
            <person name="Qi Q."/>
            <person name="Li W."/>
            <person name="Zhang B."/>
            <person name="Hu W."/>
            <person name="Zhang Y."/>
            <person name="Tian X."/>
            <person name="Jiao Y."/>
            <person name="Liang X."/>
            <person name="Jin J."/>
            <person name="Gao L."/>
            <person name="Zheng W."/>
            <person name="Hao B."/>
            <person name="Liu S.-M."/>
            <person name="Wang W."/>
            <person name="Yuan L."/>
            <person name="Cao M."/>
            <person name="McDermott J."/>
            <person name="Samudrala R."/>
            <person name="Wang J."/>
            <person name="Wong G.K.-S."/>
            <person name="Yang H."/>
        </authorList>
    </citation>
    <scope>NUCLEOTIDE SEQUENCE [LARGE SCALE GENOMIC DNA]</scope>
    <source>
        <strain>cv. Nipponbare</strain>
    </source>
</reference>
<reference key="6">
    <citation type="journal article" date="2003" name="Science">
        <title>Collection, mapping, and annotation of over 28,000 cDNA clones from japonica rice.</title>
        <authorList>
            <consortium name="The rice full-length cDNA consortium"/>
        </authorList>
    </citation>
    <scope>NUCLEOTIDE SEQUENCE [LARGE SCALE MRNA]</scope>
    <source>
        <strain>cv. Nipponbare</strain>
    </source>
</reference>
<reference key="7">
    <citation type="journal article" date="2006" name="Plant Physiol.">
        <title>Genomic organization, differential expression, and interaction of SQUAMOSA promoter-binding-like transcription factors and microRNA156 in rice.</title>
        <authorList>
            <person name="Xie K."/>
            <person name="Wu C."/>
            <person name="Xiong L."/>
        </authorList>
    </citation>
    <scope>TISSUE SPECIFICITY</scope>
    <scope>GENE FAMILY</scope>
    <scope>NOMENCLATURE</scope>
</reference>
<reference key="8">
    <citation type="journal article" date="2008" name="Gene">
        <title>Comparative study of SBP-box gene family in Arabidopsis and rice.</title>
        <authorList>
            <person name="Yang Z."/>
            <person name="Wang X."/>
            <person name="Gu S."/>
            <person name="Hu Z."/>
            <person name="Xu H."/>
            <person name="Xu C."/>
        </authorList>
    </citation>
    <scope>GENE FAMILY</scope>
</reference>
<organism>
    <name type="scientific">Oryza sativa subsp. japonica</name>
    <name type="common">Rice</name>
    <dbReference type="NCBI Taxonomy" id="39947"/>
    <lineage>
        <taxon>Eukaryota</taxon>
        <taxon>Viridiplantae</taxon>
        <taxon>Streptophyta</taxon>
        <taxon>Embryophyta</taxon>
        <taxon>Tracheophyta</taxon>
        <taxon>Spermatophyta</taxon>
        <taxon>Magnoliopsida</taxon>
        <taxon>Liliopsida</taxon>
        <taxon>Poales</taxon>
        <taxon>Poaceae</taxon>
        <taxon>BOP clade</taxon>
        <taxon>Oryzoideae</taxon>
        <taxon>Oryzeae</taxon>
        <taxon>Oryzinae</taxon>
        <taxon>Oryza</taxon>
        <taxon>Oryza sativa</taxon>
    </lineage>
</organism>
<dbReference type="EMBL" id="AP002482">
    <property type="protein sequence ID" value="BAA96636.1"/>
    <property type="molecule type" value="Genomic_DNA"/>
</dbReference>
<dbReference type="EMBL" id="AP008207">
    <property type="protein sequence ID" value="BAF04707.1"/>
    <property type="molecule type" value="Genomic_DNA"/>
</dbReference>
<dbReference type="EMBL" id="AP014957">
    <property type="protein sequence ID" value="BAS71667.1"/>
    <property type="molecule type" value="Genomic_DNA"/>
</dbReference>
<dbReference type="EMBL" id="CM000138">
    <property type="protein sequence ID" value="EEE54382.1"/>
    <property type="molecule type" value="Genomic_DNA"/>
</dbReference>
<dbReference type="EMBL" id="AK068471">
    <property type="status" value="NOT_ANNOTATED_CDS"/>
    <property type="molecule type" value="mRNA"/>
</dbReference>
<dbReference type="RefSeq" id="XP_015614292.1">
    <property type="nucleotide sequence ID" value="XM_015758806.1"/>
</dbReference>
<dbReference type="RefSeq" id="XP_015614297.1">
    <property type="nucleotide sequence ID" value="XM_015758811.1"/>
</dbReference>
<dbReference type="SMR" id="Q9LGU7"/>
<dbReference type="STRING" id="39947.Q9LGU7"/>
<dbReference type="PaxDb" id="39947-Q9LGU7"/>
<dbReference type="EnsemblPlants" id="Os01t0292900-01">
    <property type="protein sequence ID" value="Os01t0292900-01"/>
    <property type="gene ID" value="Os01g0292900"/>
</dbReference>
<dbReference type="EnsemblPlants" id="Os01t0292900-02">
    <property type="protein sequence ID" value="Os01t0292900-02"/>
    <property type="gene ID" value="Os01g0292900"/>
</dbReference>
<dbReference type="Gramene" id="Os01t0292900-01">
    <property type="protein sequence ID" value="Os01t0292900-01"/>
    <property type="gene ID" value="Os01g0292900"/>
</dbReference>
<dbReference type="Gramene" id="Os01t0292900-02">
    <property type="protein sequence ID" value="Os01t0292900-02"/>
    <property type="gene ID" value="Os01g0292900"/>
</dbReference>
<dbReference type="KEGG" id="dosa:Os01g0292900"/>
<dbReference type="eggNOG" id="ENOG502QS71">
    <property type="taxonomic scope" value="Eukaryota"/>
</dbReference>
<dbReference type="HOGENOM" id="CLU_006255_3_0_1"/>
<dbReference type="InParanoid" id="Q9LGU7"/>
<dbReference type="OMA" id="GWMYARV"/>
<dbReference type="OrthoDB" id="514967at2759"/>
<dbReference type="Proteomes" id="UP000000763">
    <property type="component" value="Chromosome 1"/>
</dbReference>
<dbReference type="Proteomes" id="UP000007752">
    <property type="component" value="Chromosome 1"/>
</dbReference>
<dbReference type="Proteomes" id="UP000059680">
    <property type="component" value="Chromosome 1"/>
</dbReference>
<dbReference type="GO" id="GO:0005634">
    <property type="term" value="C:nucleus"/>
    <property type="evidence" value="ECO:0007669"/>
    <property type="project" value="UniProtKB-SubCell"/>
</dbReference>
<dbReference type="GO" id="GO:0003677">
    <property type="term" value="F:DNA binding"/>
    <property type="evidence" value="ECO:0007669"/>
    <property type="project" value="UniProtKB-KW"/>
</dbReference>
<dbReference type="GO" id="GO:0008270">
    <property type="term" value="F:zinc ion binding"/>
    <property type="evidence" value="ECO:0007669"/>
    <property type="project" value="UniProtKB-KW"/>
</dbReference>
<dbReference type="Gene3D" id="1.25.40.20">
    <property type="entry name" value="Ankyrin repeat-containing domain"/>
    <property type="match status" value="1"/>
</dbReference>
<dbReference type="Gene3D" id="4.10.1100.10">
    <property type="entry name" value="Transcription factor, SBP-box domain"/>
    <property type="match status" value="1"/>
</dbReference>
<dbReference type="InterPro" id="IPR036770">
    <property type="entry name" value="Ankyrin_rpt-contain_sf"/>
</dbReference>
<dbReference type="InterPro" id="IPR044817">
    <property type="entry name" value="SBP-like"/>
</dbReference>
<dbReference type="InterPro" id="IPR004333">
    <property type="entry name" value="SBP_dom"/>
</dbReference>
<dbReference type="InterPro" id="IPR036893">
    <property type="entry name" value="SBP_sf"/>
</dbReference>
<dbReference type="PANTHER" id="PTHR31251:SF204">
    <property type="entry name" value="SQUAMOSA PROMOTER-BINDING-LIKE PROTEIN 1"/>
    <property type="match status" value="1"/>
</dbReference>
<dbReference type="PANTHER" id="PTHR31251">
    <property type="entry name" value="SQUAMOSA PROMOTER-BINDING-LIKE PROTEIN 4"/>
    <property type="match status" value="1"/>
</dbReference>
<dbReference type="Pfam" id="PF03110">
    <property type="entry name" value="SBP"/>
    <property type="match status" value="1"/>
</dbReference>
<dbReference type="SUPFAM" id="SSF48403">
    <property type="entry name" value="Ankyrin repeat"/>
    <property type="match status" value="1"/>
</dbReference>
<dbReference type="SUPFAM" id="SSF103612">
    <property type="entry name" value="SBT domain"/>
    <property type="match status" value="1"/>
</dbReference>
<dbReference type="PROSITE" id="PS51141">
    <property type="entry name" value="ZF_SBP"/>
    <property type="match status" value="1"/>
</dbReference>
<feature type="chain" id="PRO_0000308223" description="Squamosa promoter-binding-like protein 1">
    <location>
        <begin position="1"/>
        <end position="862"/>
    </location>
</feature>
<feature type="zinc finger region" description="SBP-type" evidence="3">
    <location>
        <begin position="104"/>
        <end position="181"/>
    </location>
</feature>
<feature type="region of interest" description="Disordered" evidence="4">
    <location>
        <begin position="55"/>
        <end position="98"/>
    </location>
</feature>
<feature type="short sequence motif" description="Bipartite nuclear localization signal" evidence="2">
    <location>
        <begin position="164"/>
        <end position="180"/>
    </location>
</feature>
<feature type="compositionally biased region" description="Polar residues" evidence="4">
    <location>
        <begin position="72"/>
        <end position="87"/>
    </location>
</feature>
<feature type="binding site" evidence="3">
    <location>
        <position position="107"/>
    </location>
    <ligand>
        <name>Zn(2+)</name>
        <dbReference type="ChEBI" id="CHEBI:29105"/>
        <label>1</label>
    </ligand>
</feature>
<feature type="binding site" evidence="3">
    <location>
        <position position="112"/>
    </location>
    <ligand>
        <name>Zn(2+)</name>
        <dbReference type="ChEBI" id="CHEBI:29105"/>
        <label>1</label>
    </ligand>
</feature>
<feature type="binding site" evidence="3">
    <location>
        <position position="129"/>
    </location>
    <ligand>
        <name>Zn(2+)</name>
        <dbReference type="ChEBI" id="CHEBI:29105"/>
        <label>1</label>
    </ligand>
</feature>
<feature type="binding site" evidence="3">
    <location>
        <position position="132"/>
    </location>
    <ligand>
        <name>Zn(2+)</name>
        <dbReference type="ChEBI" id="CHEBI:29105"/>
        <label>1</label>
    </ligand>
</feature>
<feature type="binding site" evidence="3">
    <location>
        <position position="148"/>
    </location>
    <ligand>
        <name>Zn(2+)</name>
        <dbReference type="ChEBI" id="CHEBI:29105"/>
        <label>2</label>
    </ligand>
</feature>
<feature type="binding site" evidence="3">
    <location>
        <position position="151"/>
    </location>
    <ligand>
        <name>Zn(2+)</name>
        <dbReference type="ChEBI" id="CHEBI:29105"/>
        <label>2</label>
    </ligand>
</feature>
<feature type="binding site" evidence="3">
    <location>
        <position position="155"/>
    </location>
    <ligand>
        <name>Zn(2+)</name>
        <dbReference type="ChEBI" id="CHEBI:29105"/>
        <label>2</label>
    </ligand>
</feature>
<feature type="binding site" evidence="3">
    <location>
        <position position="167"/>
    </location>
    <ligand>
        <name>Zn(2+)</name>
        <dbReference type="ChEBI" id="CHEBI:29105"/>
        <label>2</label>
    </ligand>
</feature>
<feature type="sequence conflict" description="In Ref. 6; AK068471." evidence="6" ref="6">
    <original>D</original>
    <variation>H</variation>
    <location>
        <position position="619"/>
    </location>
</feature>
<comment type="function">
    <text evidence="1">Trans-acting factor that binds specifically to the consensus nucleotide sequence 5'-TNCGTACAA-3'.</text>
</comment>
<comment type="subcellular location">
    <subcellularLocation>
        <location evidence="6">Nucleus</location>
    </subcellularLocation>
</comment>
<comment type="tissue specificity">
    <text evidence="5">Ubiquitous.</text>
</comment>
<comment type="domain">
    <text evidence="1">The SBP-type zinc finger is required for the binding to DNA.</text>
</comment>